<accession>A5UHU4</accession>
<keyword id="KW-0687">Ribonucleoprotein</keyword>
<keyword id="KW-0689">Ribosomal protein</keyword>
<keyword id="KW-0694">RNA-binding</keyword>
<keyword id="KW-0699">rRNA-binding</keyword>
<proteinExistence type="inferred from homology"/>
<feature type="chain" id="PRO_1000128416" description="Small ribosomal subunit protein uS14">
    <location>
        <begin position="1"/>
        <end position="101"/>
    </location>
</feature>
<comment type="function">
    <text evidence="1">Binds 16S rRNA, required for the assembly of 30S particles and may also be responsible for determining the conformation of the 16S rRNA at the A site.</text>
</comment>
<comment type="subunit">
    <text evidence="1">Part of the 30S ribosomal subunit. Contacts proteins S3 and S10.</text>
</comment>
<comment type="similarity">
    <text evidence="1">Belongs to the universal ribosomal protein uS14 family.</text>
</comment>
<evidence type="ECO:0000255" key="1">
    <source>
        <dbReference type="HAMAP-Rule" id="MF_00537"/>
    </source>
</evidence>
<evidence type="ECO:0000305" key="2"/>
<name>RS14_HAEIG</name>
<organism>
    <name type="scientific">Haemophilus influenzae (strain PittGG)</name>
    <dbReference type="NCBI Taxonomy" id="374931"/>
    <lineage>
        <taxon>Bacteria</taxon>
        <taxon>Pseudomonadati</taxon>
        <taxon>Pseudomonadota</taxon>
        <taxon>Gammaproteobacteria</taxon>
        <taxon>Pasteurellales</taxon>
        <taxon>Pasteurellaceae</taxon>
        <taxon>Haemophilus</taxon>
    </lineage>
</organism>
<sequence>MAKQSMKARDVKRVKLAEKFYTKRVELKKIISDVNASDEDRWDAVLKLQTLPRDSSPSRQRNRCRQTGRPHGVLRKFGLSRIKVREAAMRGEIPGLKKASW</sequence>
<protein>
    <recommendedName>
        <fullName evidence="1">Small ribosomal subunit protein uS14</fullName>
    </recommendedName>
    <alternativeName>
        <fullName evidence="2">30S ribosomal protein S14</fullName>
    </alternativeName>
</protein>
<gene>
    <name evidence="1" type="primary">rpsN</name>
    <name type="ordered locus">CGSHiGG_07455</name>
</gene>
<reference key="1">
    <citation type="journal article" date="2007" name="Genome Biol.">
        <title>Characterization and modeling of the Haemophilus influenzae core and supragenomes based on the complete genomic sequences of Rd and 12 clinical nontypeable strains.</title>
        <authorList>
            <person name="Hogg J.S."/>
            <person name="Hu F.Z."/>
            <person name="Janto B."/>
            <person name="Boissy R."/>
            <person name="Hayes J."/>
            <person name="Keefe R."/>
            <person name="Post J.C."/>
            <person name="Ehrlich G.D."/>
        </authorList>
    </citation>
    <scope>NUCLEOTIDE SEQUENCE [LARGE SCALE GENOMIC DNA]</scope>
    <source>
        <strain>PittGG</strain>
    </source>
</reference>
<dbReference type="EMBL" id="CP000672">
    <property type="protein sequence ID" value="ABR00350.1"/>
    <property type="molecule type" value="Genomic_DNA"/>
</dbReference>
<dbReference type="SMR" id="A5UHU4"/>
<dbReference type="KEGG" id="hiq:CGSHiGG_07455"/>
<dbReference type="HOGENOM" id="CLU_139869_0_1_6"/>
<dbReference type="Proteomes" id="UP000001990">
    <property type="component" value="Chromosome"/>
</dbReference>
<dbReference type="GO" id="GO:0005737">
    <property type="term" value="C:cytoplasm"/>
    <property type="evidence" value="ECO:0007669"/>
    <property type="project" value="UniProtKB-ARBA"/>
</dbReference>
<dbReference type="GO" id="GO:0015935">
    <property type="term" value="C:small ribosomal subunit"/>
    <property type="evidence" value="ECO:0007669"/>
    <property type="project" value="TreeGrafter"/>
</dbReference>
<dbReference type="GO" id="GO:0019843">
    <property type="term" value="F:rRNA binding"/>
    <property type="evidence" value="ECO:0007669"/>
    <property type="project" value="UniProtKB-UniRule"/>
</dbReference>
<dbReference type="GO" id="GO:0003735">
    <property type="term" value="F:structural constituent of ribosome"/>
    <property type="evidence" value="ECO:0007669"/>
    <property type="project" value="InterPro"/>
</dbReference>
<dbReference type="GO" id="GO:0006412">
    <property type="term" value="P:translation"/>
    <property type="evidence" value="ECO:0007669"/>
    <property type="project" value="UniProtKB-UniRule"/>
</dbReference>
<dbReference type="FunFam" id="1.10.287.1480:FF:000001">
    <property type="entry name" value="30S ribosomal protein S14"/>
    <property type="match status" value="1"/>
</dbReference>
<dbReference type="Gene3D" id="1.10.287.1480">
    <property type="match status" value="1"/>
</dbReference>
<dbReference type="HAMAP" id="MF_00537">
    <property type="entry name" value="Ribosomal_uS14_1"/>
    <property type="match status" value="1"/>
</dbReference>
<dbReference type="InterPro" id="IPR001209">
    <property type="entry name" value="Ribosomal_uS14"/>
</dbReference>
<dbReference type="InterPro" id="IPR023036">
    <property type="entry name" value="Ribosomal_uS14_bac/plastid"/>
</dbReference>
<dbReference type="InterPro" id="IPR018271">
    <property type="entry name" value="Ribosomal_uS14_CS"/>
</dbReference>
<dbReference type="NCBIfam" id="NF006477">
    <property type="entry name" value="PRK08881.1"/>
    <property type="match status" value="1"/>
</dbReference>
<dbReference type="PANTHER" id="PTHR19836">
    <property type="entry name" value="30S RIBOSOMAL PROTEIN S14"/>
    <property type="match status" value="1"/>
</dbReference>
<dbReference type="PANTHER" id="PTHR19836:SF19">
    <property type="entry name" value="SMALL RIBOSOMAL SUBUNIT PROTEIN US14M"/>
    <property type="match status" value="1"/>
</dbReference>
<dbReference type="Pfam" id="PF00253">
    <property type="entry name" value="Ribosomal_S14"/>
    <property type="match status" value="1"/>
</dbReference>
<dbReference type="SUPFAM" id="SSF57716">
    <property type="entry name" value="Glucocorticoid receptor-like (DNA-binding domain)"/>
    <property type="match status" value="1"/>
</dbReference>
<dbReference type="PROSITE" id="PS00527">
    <property type="entry name" value="RIBOSOMAL_S14"/>
    <property type="match status" value="1"/>
</dbReference>